<evidence type="ECO:0000305" key="1"/>
<evidence type="ECO:0007829" key="2">
    <source>
        <dbReference type="PDB" id="6S6V"/>
    </source>
</evidence>
<evidence type="ECO:0007829" key="3">
    <source>
        <dbReference type="PDB" id="7YZO"/>
    </source>
</evidence>
<sequence length="400" mass="44714">MRILHTSDWHLGQNFYSKSREAEHQAFLDWLLETAQTHQVDAIIVAGDVFDTGSPPSYARTLYNRFVVNLQQTGCHLVVLAGNHDSVATLNESRDIMAFLNTTVVASAGHAPQILPRRDGTPGAVLCPIPFLRPRDIITSQAGLNGIEKQQHLLAAITDYYQQHYADACKLRGDQPLPIIATGHLTTVGASKSDAVRDIYIGTLDAFPAQNFPPADYIALGHIHRAQIIGGMEHVRYCGSPIPLSFDECGKSKYVHLVTFSNGKLESVENLNVPVTQPMAVLKGDLASITAQLEQWRDVSQEPPVWLDIEITTDEYLHDIQRKIQALTESLPVEVLLVRRSREQRERVLASQQRETLSELSVEEVFNRRLALEELDESQQQRLQHLFTTTLHTLAGEHEA</sequence>
<dbReference type="EMBL" id="X15981">
    <property type="protein sequence ID" value="CAA34103.1"/>
    <property type="molecule type" value="Genomic_DNA"/>
</dbReference>
<dbReference type="EMBL" id="U73857">
    <property type="protein sequence ID" value="AAB18122.1"/>
    <property type="status" value="ALT_INIT"/>
    <property type="molecule type" value="Genomic_DNA"/>
</dbReference>
<dbReference type="EMBL" id="U00096">
    <property type="protein sequence ID" value="AAC73501.1"/>
    <property type="molecule type" value="Genomic_DNA"/>
</dbReference>
<dbReference type="EMBL" id="AP009048">
    <property type="protein sequence ID" value="BAE76178.1"/>
    <property type="molecule type" value="Genomic_DNA"/>
</dbReference>
<dbReference type="PIR" id="JS0349">
    <property type="entry name" value="JS0349"/>
</dbReference>
<dbReference type="RefSeq" id="NP_414932.1">
    <property type="nucleotide sequence ID" value="NC_000913.3"/>
</dbReference>
<dbReference type="RefSeq" id="WP_001221319.1">
    <property type="nucleotide sequence ID" value="NZ_STEB01000007.1"/>
</dbReference>
<dbReference type="PDB" id="6S6V">
    <property type="method" value="EM"/>
    <property type="resolution" value="3.50 A"/>
    <property type="chains" value="A/B=1-400"/>
</dbReference>
<dbReference type="PDB" id="6S85">
    <property type="method" value="EM"/>
    <property type="resolution" value="4.20 A"/>
    <property type="chains" value="A/B=1-400"/>
</dbReference>
<dbReference type="PDB" id="7YZO">
    <property type="method" value="EM"/>
    <property type="resolution" value="3.40 A"/>
    <property type="chains" value="A/B=1-400"/>
</dbReference>
<dbReference type="PDB" id="7YZP">
    <property type="method" value="EM"/>
    <property type="resolution" value="4.00 A"/>
    <property type="chains" value="A/B=1-400"/>
</dbReference>
<dbReference type="PDB" id="7Z03">
    <property type="method" value="EM"/>
    <property type="resolution" value="3.70 A"/>
    <property type="chains" value="A/B=1-400"/>
</dbReference>
<dbReference type="PDBsum" id="6S6V"/>
<dbReference type="PDBsum" id="6S85"/>
<dbReference type="PDBsum" id="7YZO"/>
<dbReference type="PDBsum" id="7YZP"/>
<dbReference type="PDBsum" id="7Z03"/>
<dbReference type="EMDB" id="EMD-10107"/>
<dbReference type="EMDB" id="EMD-14391"/>
<dbReference type="EMDB" id="EMD-14393"/>
<dbReference type="EMDB" id="EMD-14403"/>
<dbReference type="SMR" id="P0AG76"/>
<dbReference type="BioGRID" id="4262090">
    <property type="interactions" value="142"/>
</dbReference>
<dbReference type="BioGRID" id="849438">
    <property type="interactions" value="2"/>
</dbReference>
<dbReference type="ComplexPortal" id="CPX-4021">
    <property type="entry name" value="sbcCD DNA exo/endonuclease complex"/>
</dbReference>
<dbReference type="DIP" id="DIP-10828N"/>
<dbReference type="FunCoup" id="P0AG76">
    <property type="interactions" value="68"/>
</dbReference>
<dbReference type="IntAct" id="P0AG76">
    <property type="interactions" value="5"/>
</dbReference>
<dbReference type="STRING" id="511145.b0398"/>
<dbReference type="jPOST" id="P0AG76"/>
<dbReference type="PaxDb" id="511145-b0398"/>
<dbReference type="EnsemblBacteria" id="AAC73501">
    <property type="protein sequence ID" value="AAC73501"/>
    <property type="gene ID" value="b0398"/>
</dbReference>
<dbReference type="GeneID" id="93777062"/>
<dbReference type="GeneID" id="945049"/>
<dbReference type="KEGG" id="ecj:JW0388"/>
<dbReference type="KEGG" id="eco:b0398"/>
<dbReference type="KEGG" id="ecoc:C3026_01935"/>
<dbReference type="PATRIC" id="fig|1411691.4.peg.1881"/>
<dbReference type="EchoBASE" id="EB1086"/>
<dbReference type="eggNOG" id="COG0420">
    <property type="taxonomic scope" value="Bacteria"/>
</dbReference>
<dbReference type="HOGENOM" id="CLU_038045_2_0_6"/>
<dbReference type="InParanoid" id="P0AG76"/>
<dbReference type="OMA" id="LGHLHGC"/>
<dbReference type="OrthoDB" id="9773856at2"/>
<dbReference type="PhylomeDB" id="P0AG76"/>
<dbReference type="BioCyc" id="EcoCyc:EG11094-MONOMER"/>
<dbReference type="BioCyc" id="MetaCyc:EG11094-MONOMER"/>
<dbReference type="PRO" id="PR:P0AG76"/>
<dbReference type="Proteomes" id="UP000000625">
    <property type="component" value="Chromosome"/>
</dbReference>
<dbReference type="GO" id="GO:1990391">
    <property type="term" value="C:DNA repair complex"/>
    <property type="evidence" value="ECO:0000353"/>
    <property type="project" value="ComplexPortal"/>
</dbReference>
<dbReference type="GO" id="GO:0008408">
    <property type="term" value="F:3'-5' exonuclease activity"/>
    <property type="evidence" value="ECO:0007669"/>
    <property type="project" value="InterPro"/>
</dbReference>
<dbReference type="GO" id="GO:0003677">
    <property type="term" value="F:DNA binding"/>
    <property type="evidence" value="ECO:0000318"/>
    <property type="project" value="GO_Central"/>
</dbReference>
<dbReference type="GO" id="GO:0004529">
    <property type="term" value="F:DNA exonuclease activity"/>
    <property type="evidence" value="ECO:0000314"/>
    <property type="project" value="EcoCyc"/>
</dbReference>
<dbReference type="GO" id="GO:1990238">
    <property type="term" value="F:double-stranded DNA endonuclease activity"/>
    <property type="evidence" value="ECO:0000314"/>
    <property type="project" value="EcoCyc"/>
</dbReference>
<dbReference type="GO" id="GO:0000014">
    <property type="term" value="F:single-stranded DNA endodeoxyribonuclease activity"/>
    <property type="evidence" value="ECO:0000314"/>
    <property type="project" value="EcoCyc"/>
</dbReference>
<dbReference type="GO" id="GO:0006310">
    <property type="term" value="P:DNA recombination"/>
    <property type="evidence" value="ECO:0000303"/>
    <property type="project" value="ComplexPortal"/>
</dbReference>
<dbReference type="GO" id="GO:0006281">
    <property type="term" value="P:DNA repair"/>
    <property type="evidence" value="ECO:0000314"/>
    <property type="project" value="EcoCyc"/>
</dbReference>
<dbReference type="GO" id="GO:0006260">
    <property type="term" value="P:DNA replication"/>
    <property type="evidence" value="ECO:0000314"/>
    <property type="project" value="EcoCyc"/>
</dbReference>
<dbReference type="GO" id="GO:0006274">
    <property type="term" value="P:DNA replication termination"/>
    <property type="evidence" value="ECO:0000269"/>
    <property type="project" value="EcoCyc"/>
</dbReference>
<dbReference type="CDD" id="cd00840">
    <property type="entry name" value="MPP_Mre11_N"/>
    <property type="match status" value="1"/>
</dbReference>
<dbReference type="FunFam" id="3.30.160.720:FF:000001">
    <property type="entry name" value="Nuclease SbcCD subunit D"/>
    <property type="match status" value="1"/>
</dbReference>
<dbReference type="FunFam" id="3.60.21.10:FF:000163">
    <property type="entry name" value="Nuclease SbcCD subunit D"/>
    <property type="match status" value="1"/>
</dbReference>
<dbReference type="Gene3D" id="3.30.160.720">
    <property type="match status" value="1"/>
</dbReference>
<dbReference type="Gene3D" id="3.60.21.10">
    <property type="match status" value="1"/>
</dbReference>
<dbReference type="InterPro" id="IPR004843">
    <property type="entry name" value="Calcineurin-like_PHP_ApaH"/>
</dbReference>
<dbReference type="InterPro" id="IPR050535">
    <property type="entry name" value="DNA_Repair-Maintenance_Comp"/>
</dbReference>
<dbReference type="InterPro" id="IPR029052">
    <property type="entry name" value="Metallo-depent_PP-like"/>
</dbReference>
<dbReference type="InterPro" id="IPR041796">
    <property type="entry name" value="Mre11_N"/>
</dbReference>
<dbReference type="InterPro" id="IPR004593">
    <property type="entry name" value="SbcD"/>
</dbReference>
<dbReference type="InterPro" id="IPR026843">
    <property type="entry name" value="SbcD_C"/>
</dbReference>
<dbReference type="NCBIfam" id="NF008206">
    <property type="entry name" value="PRK10966.1"/>
    <property type="match status" value="1"/>
</dbReference>
<dbReference type="NCBIfam" id="TIGR00619">
    <property type="entry name" value="sbcd"/>
    <property type="match status" value="1"/>
</dbReference>
<dbReference type="PANTHER" id="PTHR30337">
    <property type="entry name" value="COMPONENT OF ATP-DEPENDENT DSDNA EXONUCLEASE"/>
    <property type="match status" value="1"/>
</dbReference>
<dbReference type="PANTHER" id="PTHR30337:SF0">
    <property type="entry name" value="NUCLEASE SBCCD SUBUNIT D"/>
    <property type="match status" value="1"/>
</dbReference>
<dbReference type="Pfam" id="PF00149">
    <property type="entry name" value="Metallophos"/>
    <property type="match status" value="1"/>
</dbReference>
<dbReference type="Pfam" id="PF12320">
    <property type="entry name" value="SbcD_C"/>
    <property type="match status" value="1"/>
</dbReference>
<dbReference type="SUPFAM" id="SSF56300">
    <property type="entry name" value="Metallo-dependent phosphatases"/>
    <property type="match status" value="1"/>
</dbReference>
<reference key="1">
    <citation type="journal article" date="1989" name="Nucleic Acids Res.">
        <title>Molecular organization of sbcC, a gene that affects genetic recombination and the viability of DNA palindromes in Escherichia coli K-12.</title>
        <authorList>
            <person name="Naom I.S."/>
            <person name="Morton S.J."/>
            <person name="Leach D.R.F."/>
            <person name="Lloyd R.G."/>
        </authorList>
    </citation>
    <scope>NUCLEOTIDE SEQUENCE [GENOMIC DNA]</scope>
    <source>
        <strain>K12</strain>
    </source>
</reference>
<reference key="2">
    <citation type="submission" date="1997-01" db="EMBL/GenBank/DDBJ databases">
        <title>Sequence of minutes 4-25 of Escherichia coli.</title>
        <authorList>
            <person name="Chung E."/>
            <person name="Allen E."/>
            <person name="Araujo R."/>
            <person name="Aparicio A.M."/>
            <person name="Davis K."/>
            <person name="Duncan M."/>
            <person name="Federspiel N."/>
            <person name="Hyman R."/>
            <person name="Kalman S."/>
            <person name="Komp C."/>
            <person name="Kurdi O."/>
            <person name="Lew H."/>
            <person name="Lin D."/>
            <person name="Namath A."/>
            <person name="Oefner P."/>
            <person name="Roberts D."/>
            <person name="Schramm S."/>
            <person name="Davis R.W."/>
        </authorList>
    </citation>
    <scope>NUCLEOTIDE SEQUENCE [LARGE SCALE GENOMIC DNA]</scope>
    <source>
        <strain>K12 / MG1655 / ATCC 47076</strain>
    </source>
</reference>
<reference key="3">
    <citation type="journal article" date="1997" name="Science">
        <title>The complete genome sequence of Escherichia coli K-12.</title>
        <authorList>
            <person name="Blattner F.R."/>
            <person name="Plunkett G. III"/>
            <person name="Bloch C.A."/>
            <person name="Perna N.T."/>
            <person name="Burland V."/>
            <person name="Riley M."/>
            <person name="Collado-Vides J."/>
            <person name="Glasner J.D."/>
            <person name="Rode C.K."/>
            <person name="Mayhew G.F."/>
            <person name="Gregor J."/>
            <person name="Davis N.W."/>
            <person name="Kirkpatrick H.A."/>
            <person name="Goeden M.A."/>
            <person name="Rose D.J."/>
            <person name="Mau B."/>
            <person name="Shao Y."/>
        </authorList>
    </citation>
    <scope>NUCLEOTIDE SEQUENCE [LARGE SCALE GENOMIC DNA]</scope>
    <source>
        <strain>K12 / MG1655 / ATCC 47076</strain>
    </source>
</reference>
<reference key="4">
    <citation type="journal article" date="2006" name="Mol. Syst. Biol.">
        <title>Highly accurate genome sequences of Escherichia coli K-12 strains MG1655 and W3110.</title>
        <authorList>
            <person name="Hayashi K."/>
            <person name="Morooka N."/>
            <person name="Yamamoto Y."/>
            <person name="Fujita K."/>
            <person name="Isono K."/>
            <person name="Choi S."/>
            <person name="Ohtsubo E."/>
            <person name="Baba T."/>
            <person name="Wanner B.L."/>
            <person name="Mori H."/>
            <person name="Horiuchi T."/>
        </authorList>
    </citation>
    <scope>NUCLEOTIDE SEQUENCE [LARGE SCALE GENOMIC DNA]</scope>
    <source>
        <strain>K12 / W3110 / ATCC 27325 / DSM 5911</strain>
    </source>
</reference>
<reference key="5">
    <citation type="journal article" date="1992" name="J. Bacteriol.">
        <title>Identification of sbcD mutations as cosuppressors of recBC that allow propagation of DNA palindromes in Escherichia coli K-12.</title>
        <authorList>
            <person name="Gibson F.P."/>
            <person name="Leach D.R.F."/>
            <person name="Lloyd R.G."/>
        </authorList>
    </citation>
    <scope>CHARACTERIZATION</scope>
</reference>
<reference key="6">
    <citation type="journal article" date="1992" name="Genetica">
        <title>The SbcCD protein of Escherichia coli is related to two putative nucleases in the UvrA superfamily of nucleotide-binding proteins.</title>
        <authorList>
            <person name="Leach D.R.F."/>
            <person name="Lloyd R.G."/>
            <person name="Coulson A.F."/>
        </authorList>
    </citation>
    <scope>CHARACTERIZATION</scope>
</reference>
<reference key="7">
    <citation type="journal article" date="1998" name="Proc. Natl. Acad. Sci. U.S.A.">
        <title>The SbcCD nuclease of Escherichia coli is a structural maintenance of chromosomes (SMC) family protein that cleaves hairpin DNA.</title>
        <authorList>
            <person name="Connelly J.C."/>
            <person name="Kirkham L.A."/>
            <person name="Leach D.R."/>
        </authorList>
    </citation>
    <scope>CHARACTERIZATION</scope>
</reference>
<reference key="8">
    <citation type="journal article" date="1999" name="Nucleic Acids Res.">
        <title>DNA cleavage and degradation by the SbcCD protein complex from Escherichia coli.</title>
        <authorList>
            <person name="Connelly J.C."/>
            <person name="de Leau E.S."/>
            <person name="Leach D.R."/>
        </authorList>
    </citation>
    <scope>CHARACTERIZATION</scope>
</reference>
<feature type="chain" id="PRO_0000182195" description="Nuclease SbcCD subunit D">
    <location>
        <begin position="1"/>
        <end position="400"/>
    </location>
</feature>
<feature type="strand" evidence="3">
    <location>
        <begin position="2"/>
        <end position="6"/>
    </location>
</feature>
<feature type="strand" evidence="2">
    <location>
        <begin position="14"/>
        <end position="17"/>
    </location>
</feature>
<feature type="helix" evidence="3">
    <location>
        <begin position="21"/>
        <end position="38"/>
    </location>
</feature>
<feature type="strand" evidence="3">
    <location>
        <begin position="41"/>
        <end position="47"/>
    </location>
</feature>
<feature type="strand" evidence="3">
    <location>
        <begin position="50"/>
        <end position="54"/>
    </location>
</feature>
<feature type="helix" evidence="3">
    <location>
        <begin position="57"/>
        <end position="69"/>
    </location>
</feature>
<feature type="turn" evidence="3">
    <location>
        <begin position="70"/>
        <end position="73"/>
    </location>
</feature>
<feature type="strand" evidence="3">
    <location>
        <begin position="76"/>
        <end position="80"/>
    </location>
</feature>
<feature type="strand" evidence="3">
    <location>
        <begin position="83"/>
        <end position="85"/>
    </location>
</feature>
<feature type="helix" evidence="3">
    <location>
        <begin position="87"/>
        <end position="92"/>
    </location>
</feature>
<feature type="helix" evidence="3">
    <location>
        <begin position="94"/>
        <end position="98"/>
    </location>
</feature>
<feature type="turn" evidence="3">
    <location>
        <begin position="99"/>
        <end position="101"/>
    </location>
</feature>
<feature type="strand" evidence="3">
    <location>
        <begin position="102"/>
        <end position="105"/>
    </location>
</feature>
<feature type="strand" evidence="3">
    <location>
        <begin position="114"/>
        <end position="116"/>
    </location>
</feature>
<feature type="strand" evidence="3">
    <location>
        <begin position="120"/>
        <end position="125"/>
    </location>
</feature>
<feature type="helix" evidence="3">
    <location>
        <begin position="134"/>
        <end position="137"/>
    </location>
</feature>
<feature type="helix" evidence="3">
    <location>
        <begin position="146"/>
        <end position="172"/>
    </location>
</feature>
<feature type="strand" evidence="3">
    <location>
        <begin position="179"/>
        <end position="182"/>
    </location>
</feature>
<feature type="strand" evidence="2">
    <location>
        <begin position="194"/>
        <end position="196"/>
    </location>
</feature>
<feature type="turn" evidence="3">
    <location>
        <begin position="201"/>
        <end position="203"/>
    </location>
</feature>
<feature type="helix" evidence="3">
    <location>
        <begin position="209"/>
        <end position="211"/>
    </location>
</feature>
<feature type="strand" evidence="3">
    <location>
        <begin position="216"/>
        <end position="220"/>
    </location>
</feature>
<feature type="strand" evidence="3">
    <location>
        <begin position="227"/>
        <end position="229"/>
    </location>
</feature>
<feature type="strand" evidence="3">
    <location>
        <begin position="232"/>
        <end position="237"/>
    </location>
</feature>
<feature type="helix" evidence="3">
    <location>
        <begin position="246"/>
        <end position="248"/>
    </location>
</feature>
<feature type="strand" evidence="3">
    <location>
        <begin position="249"/>
        <end position="251"/>
    </location>
</feature>
<feature type="strand" evidence="3">
    <location>
        <begin position="254"/>
        <end position="261"/>
    </location>
</feature>
<feature type="strand" evidence="3">
    <location>
        <begin position="264"/>
        <end position="272"/>
    </location>
</feature>
<feature type="strand" evidence="3">
    <location>
        <begin position="279"/>
        <end position="284"/>
    </location>
</feature>
<feature type="helix" evidence="3">
    <location>
        <begin position="286"/>
        <end position="293"/>
    </location>
</feature>
<feature type="helix" evidence="3">
    <location>
        <begin position="294"/>
        <end position="296"/>
    </location>
</feature>
<feature type="strand" evidence="3">
    <location>
        <begin position="305"/>
        <end position="311"/>
    </location>
</feature>
<feature type="turn" evidence="2">
    <location>
        <begin position="316"/>
        <end position="319"/>
    </location>
</feature>
<feature type="helix" evidence="3">
    <location>
        <begin position="320"/>
        <end position="327"/>
    </location>
</feature>
<feature type="turn" evidence="3">
    <location>
        <begin position="328"/>
        <end position="332"/>
    </location>
</feature>
<feature type="strand" evidence="3">
    <location>
        <begin position="333"/>
        <end position="340"/>
    </location>
</feature>
<feature type="helix" evidence="2">
    <location>
        <begin position="342"/>
        <end position="347"/>
    </location>
</feature>
<feature type="turn" evidence="3">
    <location>
        <begin position="357"/>
        <end position="359"/>
    </location>
</feature>
<feature type="helix" evidence="3">
    <location>
        <begin position="362"/>
        <end position="371"/>
    </location>
</feature>
<feature type="helix" evidence="3">
    <location>
        <begin position="377"/>
        <end position="393"/>
    </location>
</feature>
<keyword id="KW-0002">3D-structure</keyword>
<keyword id="KW-0233">DNA recombination</keyword>
<keyword id="KW-0235">DNA replication</keyword>
<keyword id="KW-0255">Endonuclease</keyword>
<keyword id="KW-0269">Exonuclease</keyword>
<keyword id="KW-0378">Hydrolase</keyword>
<keyword id="KW-0540">Nuclease</keyword>
<keyword id="KW-1185">Reference proteome</keyword>
<name>SBCD_ECOLI</name>
<proteinExistence type="evidence at protein level"/>
<organism>
    <name type="scientific">Escherichia coli (strain K12)</name>
    <dbReference type="NCBI Taxonomy" id="83333"/>
    <lineage>
        <taxon>Bacteria</taxon>
        <taxon>Pseudomonadati</taxon>
        <taxon>Pseudomonadota</taxon>
        <taxon>Gammaproteobacteria</taxon>
        <taxon>Enterobacterales</taxon>
        <taxon>Enterobacteriaceae</taxon>
        <taxon>Escherichia</taxon>
    </lineage>
</organism>
<protein>
    <recommendedName>
        <fullName>Nuclease SbcCD subunit D</fullName>
    </recommendedName>
</protein>
<comment type="function">
    <text>SbcCD cleaves DNA hairpin structures. These structures can inhibit DNA replication and are intermediates in certain DNA recombination reactions. The complex acts as a 3'-&gt;5' double strand exonuclease that can open hairpins. It also has a 5' single-strand endonuclease activity.</text>
</comment>
<comment type="subunit">
    <text>Heterodimer of SbcC and SbcD.</text>
</comment>
<comment type="similarity">
    <text evidence="1">Belongs to the SbcD family.</text>
</comment>
<comment type="sequence caution" evidence="1">
    <conflict type="erroneous initiation">
        <sequence resource="EMBL-CDS" id="AAB18122"/>
    </conflict>
</comment>
<accession>P0AG76</accession>
<accession>P13457</accession>
<accession>Q2MC28</accession>
<gene>
    <name type="primary">sbcD</name>
    <name type="synonym">yajA</name>
    <name type="ordered locus">b0398</name>
    <name type="ordered locus">JW0388</name>
</gene>